<feature type="chain" id="PRO_0000377077" description="tRNA dimethylallyltransferase 2">
    <location>
        <begin position="1"/>
        <end position="308"/>
    </location>
</feature>
<feature type="region of interest" description="Interaction with substrate tRNA" evidence="1">
    <location>
        <begin position="38"/>
        <end position="41"/>
    </location>
</feature>
<feature type="binding site" evidence="1">
    <location>
        <begin position="13"/>
        <end position="20"/>
    </location>
    <ligand>
        <name>ATP</name>
        <dbReference type="ChEBI" id="CHEBI:30616"/>
    </ligand>
</feature>
<feature type="binding site" evidence="1">
    <location>
        <begin position="15"/>
        <end position="20"/>
    </location>
    <ligand>
        <name>substrate</name>
    </ligand>
</feature>
<feature type="site" description="Interaction with substrate tRNA" evidence="1">
    <location>
        <position position="107"/>
    </location>
</feature>
<comment type="function">
    <text evidence="1">Catalyzes the transfer of a dimethylallyl group onto the adenine at position 37 in tRNAs that read codons beginning with uridine, leading to the formation of N6-(dimethylallyl)adenosine (i(6)A).</text>
</comment>
<comment type="catalytic activity">
    <reaction evidence="1">
        <text>adenosine(37) in tRNA + dimethylallyl diphosphate = N(6)-dimethylallyladenosine(37) in tRNA + diphosphate</text>
        <dbReference type="Rhea" id="RHEA:26482"/>
        <dbReference type="Rhea" id="RHEA-COMP:10162"/>
        <dbReference type="Rhea" id="RHEA-COMP:10375"/>
        <dbReference type="ChEBI" id="CHEBI:33019"/>
        <dbReference type="ChEBI" id="CHEBI:57623"/>
        <dbReference type="ChEBI" id="CHEBI:74411"/>
        <dbReference type="ChEBI" id="CHEBI:74415"/>
        <dbReference type="EC" id="2.5.1.75"/>
    </reaction>
</comment>
<comment type="cofactor">
    <cofactor evidence="1">
        <name>Mg(2+)</name>
        <dbReference type="ChEBI" id="CHEBI:18420"/>
    </cofactor>
</comment>
<comment type="subunit">
    <text evidence="1">Monomer.</text>
</comment>
<comment type="similarity">
    <text evidence="1">Belongs to the IPP transferase family.</text>
</comment>
<evidence type="ECO:0000255" key="1">
    <source>
        <dbReference type="HAMAP-Rule" id="MF_00185"/>
    </source>
</evidence>
<dbReference type="EC" id="2.5.1.75" evidence="1"/>
<dbReference type="EMBL" id="AP006841">
    <property type="protein sequence ID" value="BAD47771.1"/>
    <property type="molecule type" value="Genomic_DNA"/>
</dbReference>
<dbReference type="RefSeq" id="YP_098305.1">
    <property type="nucleotide sequence ID" value="NC_006347.1"/>
</dbReference>
<dbReference type="SMR" id="Q64XK5"/>
<dbReference type="STRING" id="295405.BF1021"/>
<dbReference type="KEGG" id="bfr:BF1021"/>
<dbReference type="PATRIC" id="fig|295405.11.peg.1016"/>
<dbReference type="HOGENOM" id="CLU_032616_0_1_10"/>
<dbReference type="OrthoDB" id="9776390at2"/>
<dbReference type="Proteomes" id="UP000002197">
    <property type="component" value="Chromosome"/>
</dbReference>
<dbReference type="GO" id="GO:0005524">
    <property type="term" value="F:ATP binding"/>
    <property type="evidence" value="ECO:0007669"/>
    <property type="project" value="UniProtKB-UniRule"/>
</dbReference>
<dbReference type="GO" id="GO:0052381">
    <property type="term" value="F:tRNA dimethylallyltransferase activity"/>
    <property type="evidence" value="ECO:0007669"/>
    <property type="project" value="UniProtKB-UniRule"/>
</dbReference>
<dbReference type="GO" id="GO:0006400">
    <property type="term" value="P:tRNA modification"/>
    <property type="evidence" value="ECO:0007669"/>
    <property type="project" value="TreeGrafter"/>
</dbReference>
<dbReference type="Gene3D" id="3.40.50.300">
    <property type="entry name" value="P-loop containing nucleotide triphosphate hydrolases"/>
    <property type="match status" value="2"/>
</dbReference>
<dbReference type="HAMAP" id="MF_00185">
    <property type="entry name" value="IPP_trans"/>
    <property type="match status" value="1"/>
</dbReference>
<dbReference type="InterPro" id="IPR039657">
    <property type="entry name" value="Dimethylallyltransferase"/>
</dbReference>
<dbReference type="InterPro" id="IPR018022">
    <property type="entry name" value="IPT"/>
</dbReference>
<dbReference type="InterPro" id="IPR027417">
    <property type="entry name" value="P-loop_NTPase"/>
</dbReference>
<dbReference type="NCBIfam" id="TIGR00174">
    <property type="entry name" value="miaA"/>
    <property type="match status" value="1"/>
</dbReference>
<dbReference type="PANTHER" id="PTHR11088">
    <property type="entry name" value="TRNA DIMETHYLALLYLTRANSFERASE"/>
    <property type="match status" value="1"/>
</dbReference>
<dbReference type="PANTHER" id="PTHR11088:SF60">
    <property type="entry name" value="TRNA DIMETHYLALLYLTRANSFERASE"/>
    <property type="match status" value="1"/>
</dbReference>
<dbReference type="Pfam" id="PF01715">
    <property type="entry name" value="IPPT"/>
    <property type="match status" value="1"/>
</dbReference>
<dbReference type="SUPFAM" id="SSF52540">
    <property type="entry name" value="P-loop containing nucleoside triphosphate hydrolases"/>
    <property type="match status" value="2"/>
</dbReference>
<keyword id="KW-0067">ATP-binding</keyword>
<keyword id="KW-0460">Magnesium</keyword>
<keyword id="KW-0547">Nucleotide-binding</keyword>
<keyword id="KW-0808">Transferase</keyword>
<keyword id="KW-0819">tRNA processing</keyword>
<sequence length="308" mass="35610">MTMPDYDLIAILGPTASGKTPFAAALAAELNTEIISADSRQIYRGMDLGTGKDLEDYTINGRQIPYHLIDIADPGYKYNVFEYQRDFLTAYETIKQKGCLPVLCGGTGLYLESVLKGYRLIPVPENQELRVRLAEKSLEELTAILSSYKTLHNSTDVDTVKRAIRAIEIEEYYAKTPIEEREFPQLNSLIIGVDIDRELRREKITRRLKQRLDDGMVEEVRRLLAEGIQPDDLIYYGLEYKYLTLYAIGKMTYDEMFTGLETAIHQFAKRQMTWFRGMERRGFTIHWVDASLPMEEKINFVKQKLKEF</sequence>
<name>MIAA2_BACFR</name>
<gene>
    <name evidence="1" type="primary">miaA2</name>
    <name type="ordered locus">BF1021</name>
</gene>
<organism>
    <name type="scientific">Bacteroides fragilis (strain YCH46)</name>
    <dbReference type="NCBI Taxonomy" id="295405"/>
    <lineage>
        <taxon>Bacteria</taxon>
        <taxon>Pseudomonadati</taxon>
        <taxon>Bacteroidota</taxon>
        <taxon>Bacteroidia</taxon>
        <taxon>Bacteroidales</taxon>
        <taxon>Bacteroidaceae</taxon>
        <taxon>Bacteroides</taxon>
    </lineage>
</organism>
<reference key="1">
    <citation type="journal article" date="2004" name="Proc. Natl. Acad. Sci. U.S.A.">
        <title>Genomic analysis of Bacteroides fragilis reveals extensive DNA inversions regulating cell surface adaptation.</title>
        <authorList>
            <person name="Kuwahara T."/>
            <person name="Yamashita A."/>
            <person name="Hirakawa H."/>
            <person name="Nakayama H."/>
            <person name="Toh H."/>
            <person name="Okada N."/>
            <person name="Kuhara S."/>
            <person name="Hattori M."/>
            <person name="Hayashi T."/>
            <person name="Ohnishi Y."/>
        </authorList>
    </citation>
    <scope>NUCLEOTIDE SEQUENCE [LARGE SCALE GENOMIC DNA]</scope>
    <source>
        <strain>YCH46</strain>
    </source>
</reference>
<proteinExistence type="inferred from homology"/>
<protein>
    <recommendedName>
        <fullName evidence="1">tRNA dimethylallyltransferase 2</fullName>
        <ecNumber evidence="1">2.5.1.75</ecNumber>
    </recommendedName>
    <alternativeName>
        <fullName evidence="1">Dimethylallyl diphosphate:tRNA dimethylallyltransferase 2</fullName>
        <shortName evidence="1">DMAPP:tRNA dimethylallyltransferase 2</shortName>
        <shortName evidence="1">DMATase 2</shortName>
    </alternativeName>
    <alternativeName>
        <fullName evidence="1">Isopentenyl-diphosphate:tRNA isopentenyltransferase 2</fullName>
        <shortName evidence="1">IPP transferase 2</shortName>
        <shortName evidence="1">IPPT 2</shortName>
        <shortName evidence="1">IPTase 2</shortName>
    </alternativeName>
</protein>
<accession>Q64XK5</accession>